<protein>
    <recommendedName>
        <fullName>Putative 2-aminoethylphosphonate import ATP-binding protein PhnT</fullName>
    </recommendedName>
</protein>
<comment type="function">
    <text evidence="1">Probably part of the PhnSTUV complex (TC 3.A.1.11.5) involved in 2-aminoethylphosphonate import. Probably responsible for energy coupling to the transport system (By similarity).</text>
</comment>
<comment type="subcellular location">
    <subcellularLocation>
        <location evidence="1">Cell inner membrane</location>
        <topology evidence="1">Peripheral membrane protein</topology>
    </subcellularLocation>
</comment>
<comment type="similarity">
    <text evidence="3">Belongs to the ABC transporter superfamily. 2-aminoethylphosphonate importer (TC 3.A.1.11.5) family.</text>
</comment>
<gene>
    <name type="primary">phnT</name>
    <name type="ordered locus">STY0467</name>
    <name type="ordered locus">t2435</name>
</gene>
<organism>
    <name type="scientific">Salmonella typhi</name>
    <dbReference type="NCBI Taxonomy" id="90370"/>
    <lineage>
        <taxon>Bacteria</taxon>
        <taxon>Pseudomonadati</taxon>
        <taxon>Pseudomonadota</taxon>
        <taxon>Gammaproteobacteria</taxon>
        <taxon>Enterobacterales</taxon>
        <taxon>Enterobacteriaceae</taxon>
        <taxon>Salmonella</taxon>
    </lineage>
</organism>
<keyword id="KW-0067">ATP-binding</keyword>
<keyword id="KW-0997">Cell inner membrane</keyword>
<keyword id="KW-1003">Cell membrane</keyword>
<keyword id="KW-0472">Membrane</keyword>
<keyword id="KW-0547">Nucleotide-binding</keyword>
<keyword id="KW-0813">Transport</keyword>
<name>PHNT_SALTI</name>
<dbReference type="EMBL" id="AL513382">
    <property type="protein sequence ID" value="CAD08884.1"/>
    <property type="molecule type" value="Genomic_DNA"/>
</dbReference>
<dbReference type="EMBL" id="AE014613">
    <property type="protein sequence ID" value="AAO70025.1"/>
    <property type="molecule type" value="Genomic_DNA"/>
</dbReference>
<dbReference type="RefSeq" id="NP_455022.1">
    <property type="nucleotide sequence ID" value="NC_003198.1"/>
</dbReference>
<dbReference type="RefSeq" id="WP_000928794.1">
    <property type="nucleotide sequence ID" value="NZ_WSUR01000026.1"/>
</dbReference>
<dbReference type="SMR" id="Q8Z8W8"/>
<dbReference type="STRING" id="220341.gene:17584489"/>
<dbReference type="KEGG" id="stt:t2435"/>
<dbReference type="KEGG" id="sty:STY0467"/>
<dbReference type="PATRIC" id="fig|220341.7.peg.468"/>
<dbReference type="eggNOG" id="COG3842">
    <property type="taxonomic scope" value="Bacteria"/>
</dbReference>
<dbReference type="HOGENOM" id="CLU_000604_1_1_6"/>
<dbReference type="OMA" id="HITAIHV"/>
<dbReference type="OrthoDB" id="9802264at2"/>
<dbReference type="Proteomes" id="UP000000541">
    <property type="component" value="Chromosome"/>
</dbReference>
<dbReference type="Proteomes" id="UP000002670">
    <property type="component" value="Chromosome"/>
</dbReference>
<dbReference type="GO" id="GO:0043190">
    <property type="term" value="C:ATP-binding cassette (ABC) transporter complex"/>
    <property type="evidence" value="ECO:0007669"/>
    <property type="project" value="InterPro"/>
</dbReference>
<dbReference type="GO" id="GO:0005524">
    <property type="term" value="F:ATP binding"/>
    <property type="evidence" value="ECO:0007669"/>
    <property type="project" value="UniProtKB-KW"/>
</dbReference>
<dbReference type="GO" id="GO:0016887">
    <property type="term" value="F:ATP hydrolysis activity"/>
    <property type="evidence" value="ECO:0007669"/>
    <property type="project" value="InterPro"/>
</dbReference>
<dbReference type="GO" id="GO:0022857">
    <property type="term" value="F:transmembrane transporter activity"/>
    <property type="evidence" value="ECO:0007669"/>
    <property type="project" value="InterPro"/>
</dbReference>
<dbReference type="FunFam" id="3.40.50.300:FF:000425">
    <property type="entry name" value="Probable ABC transporter, ATP-binding subunit"/>
    <property type="match status" value="1"/>
</dbReference>
<dbReference type="Gene3D" id="2.40.50.100">
    <property type="match status" value="1"/>
</dbReference>
<dbReference type="Gene3D" id="3.40.50.300">
    <property type="entry name" value="P-loop containing nucleotide triphosphate hydrolases"/>
    <property type="match status" value="1"/>
</dbReference>
<dbReference type="InterPro" id="IPR003593">
    <property type="entry name" value="AAA+_ATPase"/>
</dbReference>
<dbReference type="InterPro" id="IPR050093">
    <property type="entry name" value="ABC_SmlMolc_Importer"/>
</dbReference>
<dbReference type="InterPro" id="IPR003439">
    <property type="entry name" value="ABC_transporter-like_ATP-bd"/>
</dbReference>
<dbReference type="InterPro" id="IPR017871">
    <property type="entry name" value="ABC_transporter-like_CS"/>
</dbReference>
<dbReference type="InterPro" id="IPR017662">
    <property type="entry name" value="AminoethylPonate_ABC_PhnT"/>
</dbReference>
<dbReference type="InterPro" id="IPR008995">
    <property type="entry name" value="Mo/tungstate-bd_C_term_dom"/>
</dbReference>
<dbReference type="InterPro" id="IPR027417">
    <property type="entry name" value="P-loop_NTPase"/>
</dbReference>
<dbReference type="InterPro" id="IPR013611">
    <property type="entry name" value="Transp-assoc_OB_typ2"/>
</dbReference>
<dbReference type="NCBIfam" id="TIGR03258">
    <property type="entry name" value="PhnT"/>
    <property type="match status" value="1"/>
</dbReference>
<dbReference type="PANTHER" id="PTHR42781">
    <property type="entry name" value="SPERMIDINE/PUTRESCINE IMPORT ATP-BINDING PROTEIN POTA"/>
    <property type="match status" value="1"/>
</dbReference>
<dbReference type="PANTHER" id="PTHR42781:SF4">
    <property type="entry name" value="SPERMIDINE_PUTRESCINE IMPORT ATP-BINDING PROTEIN POTA"/>
    <property type="match status" value="1"/>
</dbReference>
<dbReference type="Pfam" id="PF00005">
    <property type="entry name" value="ABC_tran"/>
    <property type="match status" value="1"/>
</dbReference>
<dbReference type="Pfam" id="PF08402">
    <property type="entry name" value="TOBE_2"/>
    <property type="match status" value="1"/>
</dbReference>
<dbReference type="SMART" id="SM00382">
    <property type="entry name" value="AAA"/>
    <property type="match status" value="1"/>
</dbReference>
<dbReference type="SUPFAM" id="SSF50331">
    <property type="entry name" value="MOP-like"/>
    <property type="match status" value="1"/>
</dbReference>
<dbReference type="SUPFAM" id="SSF52540">
    <property type="entry name" value="P-loop containing nucleoside triphosphate hydrolases"/>
    <property type="match status" value="1"/>
</dbReference>
<dbReference type="PROSITE" id="PS00211">
    <property type="entry name" value="ABC_TRANSPORTER_1"/>
    <property type="match status" value="1"/>
</dbReference>
<dbReference type="PROSITE" id="PS50893">
    <property type="entry name" value="ABC_TRANSPORTER_2"/>
    <property type="match status" value="1"/>
</dbReference>
<evidence type="ECO:0000250" key="1"/>
<evidence type="ECO:0000255" key="2">
    <source>
        <dbReference type="PROSITE-ProRule" id="PRU00434"/>
    </source>
</evidence>
<evidence type="ECO:0000305" key="3"/>
<sequence length="369" mass="40091">MLMKTTAVHAPASQGTSGIVLDSLRVAYHGNVVLKPLSLTIEPGEVLALIGPSGSGKTTVLRAVAGFVQPAGGRILIGDTDVTHLPPYKRGLAMVVQNYALFPHLKVEDNVAFGLRAQKQPKALINERVTQALKTVGMSDYATRYPHQLSGGQQQRVAIARAIAVRPRVLLLDEPLSALDAQIRHNMVEEIARLHRELPELTILYVTHDQTEALTLADKIGIMKDGSLIAHGETRALYHHPPNRFAAEFLGRANILSAIALGITEVPGLVDVSCGGAVIRAFSQGSHHGYNKLLCIRPQHLSLTPRSAYSNRFNATLQSVHWQGDLTHLLCDVAGETVRMVLTHVNPLPRVGDKLALWFEPDDAVLIEV</sequence>
<feature type="chain" id="PRO_0000286741" description="Putative 2-aminoethylphosphonate import ATP-binding protein PhnT">
    <location>
        <begin position="1"/>
        <end position="369"/>
    </location>
</feature>
<feature type="domain" description="ABC transporter" evidence="2">
    <location>
        <begin position="19"/>
        <end position="250"/>
    </location>
</feature>
<feature type="binding site" evidence="2">
    <location>
        <begin position="51"/>
        <end position="58"/>
    </location>
    <ligand>
        <name>ATP</name>
        <dbReference type="ChEBI" id="CHEBI:30616"/>
    </ligand>
</feature>
<reference key="1">
    <citation type="journal article" date="2001" name="Nature">
        <title>Complete genome sequence of a multiple drug resistant Salmonella enterica serovar Typhi CT18.</title>
        <authorList>
            <person name="Parkhill J."/>
            <person name="Dougan G."/>
            <person name="James K.D."/>
            <person name="Thomson N.R."/>
            <person name="Pickard D."/>
            <person name="Wain J."/>
            <person name="Churcher C.M."/>
            <person name="Mungall K.L."/>
            <person name="Bentley S.D."/>
            <person name="Holden M.T.G."/>
            <person name="Sebaihia M."/>
            <person name="Baker S."/>
            <person name="Basham D."/>
            <person name="Brooks K."/>
            <person name="Chillingworth T."/>
            <person name="Connerton P."/>
            <person name="Cronin A."/>
            <person name="Davis P."/>
            <person name="Davies R.M."/>
            <person name="Dowd L."/>
            <person name="White N."/>
            <person name="Farrar J."/>
            <person name="Feltwell T."/>
            <person name="Hamlin N."/>
            <person name="Haque A."/>
            <person name="Hien T.T."/>
            <person name="Holroyd S."/>
            <person name="Jagels K."/>
            <person name="Krogh A."/>
            <person name="Larsen T.S."/>
            <person name="Leather S."/>
            <person name="Moule S."/>
            <person name="O'Gaora P."/>
            <person name="Parry C."/>
            <person name="Quail M.A."/>
            <person name="Rutherford K.M."/>
            <person name="Simmonds M."/>
            <person name="Skelton J."/>
            <person name="Stevens K."/>
            <person name="Whitehead S."/>
            <person name="Barrell B.G."/>
        </authorList>
    </citation>
    <scope>NUCLEOTIDE SEQUENCE [LARGE SCALE GENOMIC DNA]</scope>
    <source>
        <strain>CT18</strain>
    </source>
</reference>
<reference key="2">
    <citation type="journal article" date="2003" name="J. Bacteriol.">
        <title>Comparative genomics of Salmonella enterica serovar Typhi strains Ty2 and CT18.</title>
        <authorList>
            <person name="Deng W."/>
            <person name="Liou S.-R."/>
            <person name="Plunkett G. III"/>
            <person name="Mayhew G.F."/>
            <person name="Rose D.J."/>
            <person name="Burland V."/>
            <person name="Kodoyianni V."/>
            <person name="Schwartz D.C."/>
            <person name="Blattner F.R."/>
        </authorList>
    </citation>
    <scope>NUCLEOTIDE SEQUENCE [LARGE SCALE GENOMIC DNA]</scope>
    <source>
        <strain>ATCC 700931 / Ty2</strain>
    </source>
</reference>
<accession>Q8Z8W8</accession>
<accession>Q7C879</accession>
<proteinExistence type="inferred from homology"/>